<organism>
    <name type="scientific">Eremothecium gossypii (strain ATCC 10895 / CBS 109.51 / FGSC 9923 / NRRL Y-1056)</name>
    <name type="common">Yeast</name>
    <name type="synonym">Ashbya gossypii</name>
    <dbReference type="NCBI Taxonomy" id="284811"/>
    <lineage>
        <taxon>Eukaryota</taxon>
        <taxon>Fungi</taxon>
        <taxon>Dikarya</taxon>
        <taxon>Ascomycota</taxon>
        <taxon>Saccharomycotina</taxon>
        <taxon>Saccharomycetes</taxon>
        <taxon>Saccharomycetales</taxon>
        <taxon>Saccharomycetaceae</taxon>
        <taxon>Eremothecium</taxon>
    </lineage>
</organism>
<evidence type="ECO:0000250" key="1"/>
<evidence type="ECO:0000256" key="2">
    <source>
        <dbReference type="SAM" id="MobiDB-lite"/>
    </source>
</evidence>
<evidence type="ECO:0000305" key="3"/>
<sequence length="69" mass="8100">MSDKPATPTKHALEDEDEFEDFPVDSWPSTETLKAYKEGDSCLWEEDWDDVEVEDDFTKELKKELESNK</sequence>
<dbReference type="EMBL" id="AE016818">
    <property type="protein sequence ID" value="AAS52934.1"/>
    <property type="molecule type" value="Genomic_DNA"/>
</dbReference>
<dbReference type="RefSeq" id="NP_985110.1">
    <property type="nucleotide sequence ID" value="NM_210464.2"/>
</dbReference>
<dbReference type="SMR" id="P62499"/>
<dbReference type="FunCoup" id="P62499">
    <property type="interactions" value="249"/>
</dbReference>
<dbReference type="STRING" id="284811.P62499"/>
<dbReference type="EnsemblFungi" id="AAS52934">
    <property type="protein sequence ID" value="AAS52934"/>
    <property type="gene ID" value="AGOS_AER253W"/>
</dbReference>
<dbReference type="GeneID" id="4621320"/>
<dbReference type="KEGG" id="ago:AGOS_AER253W"/>
<dbReference type="eggNOG" id="KOG4764">
    <property type="taxonomic scope" value="Eukaryota"/>
</dbReference>
<dbReference type="HOGENOM" id="CLU_141774_1_0_1"/>
<dbReference type="InParanoid" id="P62499"/>
<dbReference type="OMA" id="IWEENWD"/>
<dbReference type="Proteomes" id="UP000000591">
    <property type="component" value="Chromosome V"/>
</dbReference>
<dbReference type="GO" id="GO:0005829">
    <property type="term" value="C:cytosol"/>
    <property type="evidence" value="ECO:0007669"/>
    <property type="project" value="EnsemblFungi"/>
</dbReference>
<dbReference type="GO" id="GO:0000502">
    <property type="term" value="C:proteasome complex"/>
    <property type="evidence" value="ECO:0000318"/>
    <property type="project" value="GO_Central"/>
</dbReference>
<dbReference type="GO" id="GO:0008541">
    <property type="term" value="C:proteasome regulatory particle, lid subcomplex"/>
    <property type="evidence" value="ECO:0007669"/>
    <property type="project" value="EnsemblFungi"/>
</dbReference>
<dbReference type="GO" id="GO:0034515">
    <property type="term" value="C:proteasome storage granule"/>
    <property type="evidence" value="ECO:0007669"/>
    <property type="project" value="EnsemblFungi"/>
</dbReference>
<dbReference type="GO" id="GO:0070390">
    <property type="term" value="C:transcription export complex 2"/>
    <property type="evidence" value="ECO:0007669"/>
    <property type="project" value="EnsemblFungi"/>
</dbReference>
<dbReference type="GO" id="GO:0060090">
    <property type="term" value="F:molecular adaptor activity"/>
    <property type="evidence" value="ECO:0007669"/>
    <property type="project" value="EnsemblFungi"/>
</dbReference>
<dbReference type="GO" id="GO:0044183">
    <property type="term" value="F:protein folding chaperone"/>
    <property type="evidence" value="ECO:0007669"/>
    <property type="project" value="EnsemblFungi"/>
</dbReference>
<dbReference type="GO" id="GO:0000724">
    <property type="term" value="P:double-strand break repair via homologous recombination"/>
    <property type="evidence" value="ECO:0000318"/>
    <property type="project" value="GO_Central"/>
</dbReference>
<dbReference type="GO" id="GO:0030447">
    <property type="term" value="P:filamentous growth"/>
    <property type="evidence" value="ECO:0007669"/>
    <property type="project" value="EnsemblFungi"/>
</dbReference>
<dbReference type="GO" id="GO:0035753">
    <property type="term" value="P:maintenance of DNA trinucleotide repeats"/>
    <property type="evidence" value="ECO:0007669"/>
    <property type="project" value="EnsemblFungi"/>
</dbReference>
<dbReference type="GO" id="GO:0006406">
    <property type="term" value="P:mRNA export from nucleus"/>
    <property type="evidence" value="ECO:0007669"/>
    <property type="project" value="EnsemblFungi"/>
</dbReference>
<dbReference type="GO" id="GO:0043248">
    <property type="term" value="P:proteasome assembly"/>
    <property type="evidence" value="ECO:0007669"/>
    <property type="project" value="EnsemblFungi"/>
</dbReference>
<dbReference type="GO" id="GO:0043161">
    <property type="term" value="P:proteasome-mediated ubiquitin-dependent protein catabolic process"/>
    <property type="evidence" value="ECO:0007669"/>
    <property type="project" value="EnsemblFungi"/>
</dbReference>
<dbReference type="GO" id="GO:0051726">
    <property type="term" value="P:regulation of cell cycle"/>
    <property type="evidence" value="ECO:0007669"/>
    <property type="project" value="EnsemblFungi"/>
</dbReference>
<dbReference type="GO" id="GO:0072742">
    <property type="term" value="P:SAGA complex localization to transcription regulatory region"/>
    <property type="evidence" value="ECO:0007669"/>
    <property type="project" value="EnsemblFungi"/>
</dbReference>
<dbReference type="InterPro" id="IPR007834">
    <property type="entry name" value="DSS1_SEM1"/>
</dbReference>
<dbReference type="PANTHER" id="PTHR16771">
    <property type="entry name" value="26 PROTEASOME COMPLEX SUBUNIT DSS1"/>
    <property type="match status" value="1"/>
</dbReference>
<dbReference type="PANTHER" id="PTHR16771:SF0">
    <property type="entry name" value="26S PROTEASOME COMPLEX SUBUNIT SEM1"/>
    <property type="match status" value="1"/>
</dbReference>
<dbReference type="Pfam" id="PF05160">
    <property type="entry name" value="DSS1_SEM1"/>
    <property type="match status" value="1"/>
</dbReference>
<dbReference type="SMART" id="SM01385">
    <property type="entry name" value="DSS1_SEM1"/>
    <property type="match status" value="1"/>
</dbReference>
<name>SEM1_EREGS</name>
<comment type="function">
    <text evidence="1">Subunit of the 26S proteasome which plays a role in ubiquitin-dependent proteolysis.</text>
</comment>
<comment type="subunit">
    <text evidence="1">Part of the 26S proteasome.</text>
</comment>
<comment type="similarity">
    <text evidence="3">Belongs to the DSS1/SEM1 family.</text>
</comment>
<gene>
    <name type="primary">SEM1</name>
    <name type="ordered locus">AER253W</name>
</gene>
<protein>
    <recommendedName>
        <fullName>Probable 26S proteasome complex subunit SEM1</fullName>
    </recommendedName>
</protein>
<keyword id="KW-0647">Proteasome</keyword>
<keyword id="KW-1185">Reference proteome</keyword>
<reference key="1">
    <citation type="journal article" date="2004" name="Science">
        <title>The Ashbya gossypii genome as a tool for mapping the ancient Saccharomyces cerevisiae genome.</title>
        <authorList>
            <person name="Dietrich F.S."/>
            <person name="Voegeli S."/>
            <person name="Brachat S."/>
            <person name="Lerch A."/>
            <person name="Gates K."/>
            <person name="Steiner S."/>
            <person name="Mohr C."/>
            <person name="Poehlmann R."/>
            <person name="Luedi P."/>
            <person name="Choi S."/>
            <person name="Wing R.A."/>
            <person name="Flavier A."/>
            <person name="Gaffney T.D."/>
            <person name="Philippsen P."/>
        </authorList>
    </citation>
    <scope>NUCLEOTIDE SEQUENCE [LARGE SCALE GENOMIC DNA]</scope>
    <source>
        <strain>ATCC 10895 / CBS 109.51 / FGSC 9923 / NRRL Y-1056</strain>
    </source>
</reference>
<reference key="2">
    <citation type="journal article" date="2013" name="G3 (Bethesda)">
        <title>Genomes of Ashbya fungi isolated from insects reveal four mating-type loci, numerous translocations, lack of transposons, and distinct gene duplications.</title>
        <authorList>
            <person name="Dietrich F.S."/>
            <person name="Voegeli S."/>
            <person name="Kuo S."/>
            <person name="Philippsen P."/>
        </authorList>
    </citation>
    <scope>GENOME REANNOTATION</scope>
    <source>
        <strain>ATCC 10895 / CBS 109.51 / FGSC 9923 / NRRL Y-1056</strain>
    </source>
</reference>
<proteinExistence type="inferred from homology"/>
<feature type="chain" id="PRO_0000122967" description="Probable 26S proteasome complex subunit SEM1">
    <location>
        <begin position="1"/>
        <end position="69"/>
    </location>
</feature>
<feature type="region of interest" description="Disordered" evidence="2">
    <location>
        <begin position="1"/>
        <end position="26"/>
    </location>
</feature>
<feature type="compositionally biased region" description="Acidic residues" evidence="2">
    <location>
        <begin position="14"/>
        <end position="23"/>
    </location>
</feature>
<accession>P62499</accession>
<accession>Q756K1</accession>